<evidence type="ECO:0000250" key="1">
    <source>
        <dbReference type="UniProtKB" id="A0AVT1"/>
    </source>
</evidence>
<evidence type="ECO:0000250" key="2">
    <source>
        <dbReference type="UniProtKB" id="P22515"/>
    </source>
</evidence>
<evidence type="ECO:0000269" key="3">
    <source>
    </source>
</evidence>
<evidence type="ECO:0000305" key="4"/>
<evidence type="ECO:0007744" key="5">
    <source>
    </source>
</evidence>
<protein>
    <recommendedName>
        <fullName>Ubiquitin-like modifier-activating enzyme 6</fullName>
        <shortName>Ubiquitin-activating enzyme 6</shortName>
        <ecNumber evidence="1">6.2.1.45</ecNumber>
    </recommendedName>
    <alternativeName>
        <fullName>Ubiquitin-activating enzyme E1-like protein 2</fullName>
        <shortName>E1-L2</shortName>
    </alternativeName>
</protein>
<name>UBA6_MOUSE</name>
<organism>
    <name type="scientific">Mus musculus</name>
    <name type="common">Mouse</name>
    <dbReference type="NCBI Taxonomy" id="10090"/>
    <lineage>
        <taxon>Eukaryota</taxon>
        <taxon>Metazoa</taxon>
        <taxon>Chordata</taxon>
        <taxon>Craniata</taxon>
        <taxon>Vertebrata</taxon>
        <taxon>Euteleostomi</taxon>
        <taxon>Mammalia</taxon>
        <taxon>Eutheria</taxon>
        <taxon>Euarchontoglires</taxon>
        <taxon>Glires</taxon>
        <taxon>Rodentia</taxon>
        <taxon>Myomorpha</taxon>
        <taxon>Muroidea</taxon>
        <taxon>Muridae</taxon>
        <taxon>Murinae</taxon>
        <taxon>Mus</taxon>
        <taxon>Mus</taxon>
    </lineage>
</organism>
<proteinExistence type="evidence at protein level"/>
<keyword id="KW-0007">Acetylation</keyword>
<keyword id="KW-0067">ATP-binding</keyword>
<keyword id="KW-0436">Ligase</keyword>
<keyword id="KW-0460">Magnesium</keyword>
<keyword id="KW-0479">Metal-binding</keyword>
<keyword id="KW-0547">Nucleotide-binding</keyword>
<keyword id="KW-0597">Phosphoprotein</keyword>
<keyword id="KW-1185">Reference proteome</keyword>
<keyword id="KW-0833">Ubl conjugation pathway</keyword>
<dbReference type="EC" id="6.2.1.45" evidence="1"/>
<dbReference type="EMBL" id="AK049603">
    <property type="protein sequence ID" value="BAC33836.1"/>
    <property type="molecule type" value="mRNA"/>
</dbReference>
<dbReference type="EMBL" id="BC063048">
    <property type="protein sequence ID" value="AAH63048.1"/>
    <property type="molecule type" value="mRNA"/>
</dbReference>
<dbReference type="CCDS" id="CCDS19378.1"/>
<dbReference type="RefSeq" id="NP_766300.1">
    <property type="nucleotide sequence ID" value="NM_172712.2"/>
</dbReference>
<dbReference type="SMR" id="Q8C7R4"/>
<dbReference type="BioGRID" id="231114">
    <property type="interactions" value="12"/>
</dbReference>
<dbReference type="FunCoup" id="Q8C7R4">
    <property type="interactions" value="3487"/>
</dbReference>
<dbReference type="IntAct" id="Q8C7R4">
    <property type="interactions" value="2"/>
</dbReference>
<dbReference type="MINT" id="Q8C7R4"/>
<dbReference type="STRING" id="10090.ENSMUSP00000035328"/>
<dbReference type="GlyGen" id="Q8C7R4">
    <property type="glycosylation" value="4 sites, 1 O-linked glycan (4 sites)"/>
</dbReference>
<dbReference type="iPTMnet" id="Q8C7R4"/>
<dbReference type="PhosphoSitePlus" id="Q8C7R4"/>
<dbReference type="SwissPalm" id="Q8C7R4"/>
<dbReference type="jPOST" id="Q8C7R4"/>
<dbReference type="PaxDb" id="10090-ENSMUSP00000035328"/>
<dbReference type="PeptideAtlas" id="Q8C7R4"/>
<dbReference type="ProteomicsDB" id="298352"/>
<dbReference type="Pumba" id="Q8C7R4"/>
<dbReference type="Antibodypedia" id="24140">
    <property type="antibodies" value="301 antibodies from 33 providers"/>
</dbReference>
<dbReference type="DNASU" id="231380"/>
<dbReference type="Ensembl" id="ENSMUST00000039373.14">
    <property type="protein sequence ID" value="ENSMUSP00000035328.8"/>
    <property type="gene ID" value="ENSMUSG00000035898.14"/>
</dbReference>
<dbReference type="GeneID" id="231380"/>
<dbReference type="KEGG" id="mmu:231380"/>
<dbReference type="UCSC" id="uc008xxj.2">
    <property type="organism name" value="mouse"/>
</dbReference>
<dbReference type="AGR" id="MGI:1913894"/>
<dbReference type="CTD" id="55236"/>
<dbReference type="MGI" id="MGI:1913894">
    <property type="gene designation" value="Uba6"/>
</dbReference>
<dbReference type="VEuPathDB" id="HostDB:ENSMUSG00000035898"/>
<dbReference type="eggNOG" id="KOG2012">
    <property type="taxonomic scope" value="Eukaryota"/>
</dbReference>
<dbReference type="GeneTree" id="ENSGT00940000158826"/>
<dbReference type="InParanoid" id="Q8C7R4"/>
<dbReference type="OMA" id="WSHCVEL"/>
<dbReference type="OrthoDB" id="10252231at2759"/>
<dbReference type="PhylomeDB" id="Q8C7R4"/>
<dbReference type="TreeFam" id="TF300586"/>
<dbReference type="Reactome" id="R-MMU-8866652">
    <property type="pathway name" value="Synthesis of active ubiquitin: roles of E1 and E2 enzymes"/>
</dbReference>
<dbReference type="Reactome" id="R-MMU-983168">
    <property type="pathway name" value="Antigen processing: Ubiquitination &amp; Proteasome degradation"/>
</dbReference>
<dbReference type="UniPathway" id="UPA00143"/>
<dbReference type="BioGRID-ORCS" id="231380">
    <property type="hits" value="15 hits in 82 CRISPR screens"/>
</dbReference>
<dbReference type="ChiTaRS" id="Uba6">
    <property type="organism name" value="mouse"/>
</dbReference>
<dbReference type="PRO" id="PR:Q8C7R4"/>
<dbReference type="Proteomes" id="UP000000589">
    <property type="component" value="Chromosome 5"/>
</dbReference>
<dbReference type="RNAct" id="Q8C7R4">
    <property type="molecule type" value="protein"/>
</dbReference>
<dbReference type="Bgee" id="ENSMUSG00000035898">
    <property type="expression patterns" value="Expressed in ear vesicle and 227 other cell types or tissues"/>
</dbReference>
<dbReference type="ExpressionAtlas" id="Q8C7R4">
    <property type="expression patterns" value="baseline and differential"/>
</dbReference>
<dbReference type="GO" id="GO:0005524">
    <property type="term" value="F:ATP binding"/>
    <property type="evidence" value="ECO:0007669"/>
    <property type="project" value="UniProtKB-KW"/>
</dbReference>
<dbReference type="GO" id="GO:0019780">
    <property type="term" value="F:FAT10 activating enzyme activity"/>
    <property type="evidence" value="ECO:0000315"/>
    <property type="project" value="UniProtKB"/>
</dbReference>
<dbReference type="GO" id="GO:0004839">
    <property type="term" value="F:ubiquitin activating enzyme activity"/>
    <property type="evidence" value="ECO:0000315"/>
    <property type="project" value="MGI"/>
</dbReference>
<dbReference type="GO" id="GO:0021764">
    <property type="term" value="P:amygdala development"/>
    <property type="evidence" value="ECO:0000315"/>
    <property type="project" value="MGI"/>
</dbReference>
<dbReference type="GO" id="GO:0060996">
    <property type="term" value="P:dendritic spine development"/>
    <property type="evidence" value="ECO:0000315"/>
    <property type="project" value="MGI"/>
</dbReference>
<dbReference type="GO" id="GO:0021766">
    <property type="term" value="P:hippocampus development"/>
    <property type="evidence" value="ECO:0000315"/>
    <property type="project" value="MGI"/>
</dbReference>
<dbReference type="GO" id="GO:0007612">
    <property type="term" value="P:learning"/>
    <property type="evidence" value="ECO:0000315"/>
    <property type="project" value="MGI"/>
</dbReference>
<dbReference type="GO" id="GO:0007626">
    <property type="term" value="P:locomotory behavior"/>
    <property type="evidence" value="ECO:0000315"/>
    <property type="project" value="MGI"/>
</dbReference>
<dbReference type="GO" id="GO:0016567">
    <property type="term" value="P:protein ubiquitination"/>
    <property type="evidence" value="ECO:0000315"/>
    <property type="project" value="UniProtKB"/>
</dbReference>
<dbReference type="GO" id="GO:0006511">
    <property type="term" value="P:ubiquitin-dependent protein catabolic process"/>
    <property type="evidence" value="ECO:0000315"/>
    <property type="project" value="UniProtKB"/>
</dbReference>
<dbReference type="CDD" id="cd01491">
    <property type="entry name" value="Ube1_repeat1"/>
    <property type="match status" value="1"/>
</dbReference>
<dbReference type="CDD" id="cd01490">
    <property type="entry name" value="Ube1_repeat2"/>
    <property type="match status" value="1"/>
</dbReference>
<dbReference type="FunFam" id="3.40.50.12550:FF:000001">
    <property type="entry name" value="Ubiquitin-activating enzyme E1 1"/>
    <property type="match status" value="1"/>
</dbReference>
<dbReference type="FunFam" id="3.40.50.720:FF:000015">
    <property type="entry name" value="Ubiquitin-activating enzyme E1 1"/>
    <property type="match status" value="1"/>
</dbReference>
<dbReference type="FunFam" id="2.40.30.180:FF:000002">
    <property type="entry name" value="Ubiquitin-activating enzyme E1 2"/>
    <property type="match status" value="1"/>
</dbReference>
<dbReference type="FunFam" id="3.10.290.60:FF:000003">
    <property type="entry name" value="Ubiquitin-like modifier activating enzyme 6"/>
    <property type="match status" value="1"/>
</dbReference>
<dbReference type="FunFam" id="3.50.50.80:FF:000001">
    <property type="entry name" value="ubiquitin-like modifier-activating enzyme 1"/>
    <property type="match status" value="1"/>
</dbReference>
<dbReference type="FunFam" id="1.10.10.2660:FF:000003">
    <property type="entry name" value="ubiquitin-like modifier-activating enzyme 6 isoform X1"/>
    <property type="match status" value="1"/>
</dbReference>
<dbReference type="Gene3D" id="3.40.50.720">
    <property type="entry name" value="NAD(P)-binding Rossmann-like Domain"/>
    <property type="match status" value="1"/>
</dbReference>
<dbReference type="Gene3D" id="2.40.30.180">
    <property type="entry name" value="Ubiquitin-activating enzyme E1, FCCH domain"/>
    <property type="match status" value="1"/>
</dbReference>
<dbReference type="Gene3D" id="3.50.50.80">
    <property type="entry name" value="Ubiquitin-activating enzyme E1, inactive adenylation domain, subdomain 1"/>
    <property type="match status" value="1"/>
</dbReference>
<dbReference type="Gene3D" id="3.40.50.12550">
    <property type="entry name" value="Ubiquitin-activating enzyme E1, inactive adenylation domain, subdomain 2"/>
    <property type="match status" value="1"/>
</dbReference>
<dbReference type="Gene3D" id="1.10.10.2660">
    <property type="entry name" value="Ubiquitin-activating enzyme E1, SCCH domain"/>
    <property type="match status" value="1"/>
</dbReference>
<dbReference type="Gene3D" id="3.10.290.60">
    <property type="entry name" value="Ubiquitin-activating enzyme E1, UFD domain"/>
    <property type="match status" value="1"/>
</dbReference>
<dbReference type="InterPro" id="IPR032420">
    <property type="entry name" value="E1_4HB"/>
</dbReference>
<dbReference type="InterPro" id="IPR032418">
    <property type="entry name" value="E1_FCCH"/>
</dbReference>
<dbReference type="InterPro" id="IPR042302">
    <property type="entry name" value="E1_FCCH_sf"/>
</dbReference>
<dbReference type="InterPro" id="IPR045886">
    <property type="entry name" value="ThiF/MoeB/HesA"/>
</dbReference>
<dbReference type="InterPro" id="IPR000594">
    <property type="entry name" value="ThiF_NAD_FAD-bd"/>
</dbReference>
<dbReference type="InterPro" id="IPR018965">
    <property type="entry name" value="Ub-activating_enz_E1_C"/>
</dbReference>
<dbReference type="InterPro" id="IPR042449">
    <property type="entry name" value="Ub-E1_IAD_1"/>
</dbReference>
<dbReference type="InterPro" id="IPR038252">
    <property type="entry name" value="UBA_E1_C_sf"/>
</dbReference>
<dbReference type="InterPro" id="IPR019572">
    <property type="entry name" value="UBA_E1_SCCH"/>
</dbReference>
<dbReference type="InterPro" id="IPR042063">
    <property type="entry name" value="Ubi_acti_E1_SCCH"/>
</dbReference>
<dbReference type="InterPro" id="IPR035985">
    <property type="entry name" value="Ubiquitin-activating_enz"/>
</dbReference>
<dbReference type="InterPro" id="IPR018075">
    <property type="entry name" value="UBQ-activ_enz_E1"/>
</dbReference>
<dbReference type="InterPro" id="IPR000011">
    <property type="entry name" value="UBQ/SUMO-activ_enz_E1-like"/>
</dbReference>
<dbReference type="NCBIfam" id="TIGR01408">
    <property type="entry name" value="Ube1"/>
    <property type="match status" value="1"/>
</dbReference>
<dbReference type="PANTHER" id="PTHR10953:SF162">
    <property type="entry name" value="SUMO-ACTIVATING ENZYME SUBUNIT 1"/>
    <property type="match status" value="1"/>
</dbReference>
<dbReference type="PANTHER" id="PTHR10953">
    <property type="entry name" value="UBIQUITIN-ACTIVATING ENZYME E1"/>
    <property type="match status" value="1"/>
</dbReference>
<dbReference type="Pfam" id="PF16191">
    <property type="entry name" value="E1_4HB"/>
    <property type="match status" value="1"/>
</dbReference>
<dbReference type="Pfam" id="PF16190">
    <property type="entry name" value="E1_FCCH"/>
    <property type="match status" value="1"/>
</dbReference>
<dbReference type="Pfam" id="PF09358">
    <property type="entry name" value="E1_UFD"/>
    <property type="match status" value="1"/>
</dbReference>
<dbReference type="Pfam" id="PF00899">
    <property type="entry name" value="ThiF"/>
    <property type="match status" value="2"/>
</dbReference>
<dbReference type="Pfam" id="PF10585">
    <property type="entry name" value="UBA_E1_SCCH"/>
    <property type="match status" value="1"/>
</dbReference>
<dbReference type="PRINTS" id="PR01849">
    <property type="entry name" value="UBIQUITINACT"/>
</dbReference>
<dbReference type="SMART" id="SM00985">
    <property type="entry name" value="UBA_e1_C"/>
    <property type="match status" value="1"/>
</dbReference>
<dbReference type="SUPFAM" id="SSF69572">
    <property type="entry name" value="Activating enzymes of the ubiquitin-like proteins"/>
    <property type="match status" value="2"/>
</dbReference>
<gene>
    <name type="primary">Uba6</name>
    <name type="synonym">Ube1l2</name>
</gene>
<feature type="chain" id="PRO_0000277798" description="Ubiquitin-like modifier-activating enzyme 6">
    <location>
        <begin position="1"/>
        <end position="1053"/>
    </location>
</feature>
<feature type="active site" description="Glycyl thioester intermediate">
    <location>
        <position position="625"/>
    </location>
</feature>
<feature type="binding site" evidence="1">
    <location>
        <position position="46"/>
    </location>
    <ligand>
        <name>ATP</name>
        <dbReference type="ChEBI" id="CHEBI:30616"/>
    </ligand>
</feature>
<feature type="binding site" evidence="1">
    <location>
        <position position="470"/>
    </location>
    <ligand>
        <name>ATP</name>
        <dbReference type="ChEBI" id="CHEBI:30616"/>
    </ligand>
</feature>
<feature type="binding site" evidence="1">
    <location>
        <position position="497"/>
    </location>
    <ligand>
        <name>ATP</name>
        <dbReference type="ChEBI" id="CHEBI:30616"/>
    </ligand>
</feature>
<feature type="binding site" evidence="2">
    <location>
        <position position="499"/>
    </location>
    <ligand>
        <name>Mg(2+)</name>
        <dbReference type="ChEBI" id="CHEBI:18420"/>
        <label>1</label>
    </ligand>
</feature>
<feature type="binding site" evidence="2">
    <location>
        <position position="502"/>
    </location>
    <ligand>
        <name>Mg(2+)</name>
        <dbReference type="ChEBI" id="CHEBI:18420"/>
        <label>1</label>
    </ligand>
</feature>
<feature type="binding site" evidence="1">
    <location>
        <position position="505"/>
    </location>
    <ligand>
        <name>ATP</name>
        <dbReference type="ChEBI" id="CHEBI:30616"/>
    </ligand>
</feature>
<feature type="binding site" evidence="1">
    <location>
        <position position="508"/>
    </location>
    <ligand>
        <name>ATP</name>
        <dbReference type="ChEBI" id="CHEBI:30616"/>
    </ligand>
</feature>
<feature type="binding site" evidence="1">
    <location>
        <position position="509"/>
    </location>
    <ligand>
        <name>ATP</name>
        <dbReference type="ChEBI" id="CHEBI:30616"/>
    </ligand>
</feature>
<feature type="binding site" evidence="1">
    <location>
        <position position="521"/>
    </location>
    <ligand>
        <name>ATP</name>
        <dbReference type="ChEBI" id="CHEBI:30616"/>
    </ligand>
</feature>
<feature type="binding site" evidence="1">
    <location>
        <position position="545"/>
    </location>
    <ligand>
        <name>ATP</name>
        <dbReference type="ChEBI" id="CHEBI:30616"/>
    </ligand>
</feature>
<feature type="binding site" evidence="1">
    <location>
        <position position="569"/>
    </location>
    <ligand>
        <name>Mg(2+)</name>
        <dbReference type="ChEBI" id="CHEBI:18420"/>
        <label>2</label>
    </ligand>
</feature>
<feature type="binding site" evidence="1">
    <location>
        <position position="570"/>
    </location>
    <ligand>
        <name>ATP</name>
        <dbReference type="ChEBI" id="CHEBI:30616"/>
    </ligand>
</feature>
<feature type="modified residue" description="N-acetylmethionine" evidence="1">
    <location>
        <position position="1"/>
    </location>
</feature>
<feature type="modified residue" description="Phosphothreonine" evidence="1">
    <location>
        <position position="54"/>
    </location>
</feature>
<feature type="modified residue" description="N6-acetyllysine" evidence="1">
    <location>
        <position position="544"/>
    </location>
</feature>
<feature type="modified residue" description="N6-acetyllysine" evidence="5">
    <location>
        <position position="729"/>
    </location>
</feature>
<feature type="modified residue" description="Phosphoserine" evidence="1">
    <location>
        <position position="737"/>
    </location>
</feature>
<comment type="function">
    <text evidence="1 3">Activates ubiquitin by first adenylating its C-terminal glycine residue with ATP, and thereafter linking this residue to the side chain of a cysteine residue in E1, yielding a ubiquitin-E1 thioester and free AMP (By similarity). Specific for ubiquitin, does not activate ubiquitin-like peptides. Also activates UBD/FAT10 conjugation via adenylation of its C-terminal glycine (PubMed:17889673). Differs from UBE1 in its specificity for substrate E2 charging. Does not charge cell cycle E2s, such as CDC34. Essential for embryonic development.</text>
</comment>
<comment type="catalytic activity">
    <reaction evidence="1">
        <text>ATP + ubiquitin + [E1 ubiquitin-activating enzyme]-L-cysteine = AMP + diphosphate + S-ubiquitinyl-[E1 ubiquitin-activating enzyme]-L-cysteine.</text>
        <dbReference type="EC" id="6.2.1.45"/>
    </reaction>
</comment>
<comment type="pathway">
    <text evidence="1">Protein modification; protein ubiquitination.</text>
</comment>
<comment type="subunit">
    <text evidence="3">Forms a thioester with UBD in cells stimulated with tumor necrosis factor-alpha (TNFa) and interferon-gamma (IFNg) (PubMed:17889673).</text>
</comment>
<comment type="disruption phenotype">
    <text evidence="3">Embryonic lethality at early stage.</text>
</comment>
<comment type="similarity">
    <text evidence="4">Belongs to the ubiquitin-activating E1 family.</text>
</comment>
<reference key="1">
    <citation type="journal article" date="2005" name="Science">
        <title>The transcriptional landscape of the mammalian genome.</title>
        <authorList>
            <person name="Carninci P."/>
            <person name="Kasukawa T."/>
            <person name="Katayama S."/>
            <person name="Gough J."/>
            <person name="Frith M.C."/>
            <person name="Maeda N."/>
            <person name="Oyama R."/>
            <person name="Ravasi T."/>
            <person name="Lenhard B."/>
            <person name="Wells C."/>
            <person name="Kodzius R."/>
            <person name="Shimokawa K."/>
            <person name="Bajic V.B."/>
            <person name="Brenner S.E."/>
            <person name="Batalov S."/>
            <person name="Forrest A.R."/>
            <person name="Zavolan M."/>
            <person name="Davis M.J."/>
            <person name="Wilming L.G."/>
            <person name="Aidinis V."/>
            <person name="Allen J.E."/>
            <person name="Ambesi-Impiombato A."/>
            <person name="Apweiler R."/>
            <person name="Aturaliya R.N."/>
            <person name="Bailey T.L."/>
            <person name="Bansal M."/>
            <person name="Baxter L."/>
            <person name="Beisel K.W."/>
            <person name="Bersano T."/>
            <person name="Bono H."/>
            <person name="Chalk A.M."/>
            <person name="Chiu K.P."/>
            <person name="Choudhary V."/>
            <person name="Christoffels A."/>
            <person name="Clutterbuck D.R."/>
            <person name="Crowe M.L."/>
            <person name="Dalla E."/>
            <person name="Dalrymple B.P."/>
            <person name="de Bono B."/>
            <person name="Della Gatta G."/>
            <person name="di Bernardo D."/>
            <person name="Down T."/>
            <person name="Engstrom P."/>
            <person name="Fagiolini M."/>
            <person name="Faulkner G."/>
            <person name="Fletcher C.F."/>
            <person name="Fukushima T."/>
            <person name="Furuno M."/>
            <person name="Futaki S."/>
            <person name="Gariboldi M."/>
            <person name="Georgii-Hemming P."/>
            <person name="Gingeras T.R."/>
            <person name="Gojobori T."/>
            <person name="Green R.E."/>
            <person name="Gustincich S."/>
            <person name="Harbers M."/>
            <person name="Hayashi Y."/>
            <person name="Hensch T.K."/>
            <person name="Hirokawa N."/>
            <person name="Hill D."/>
            <person name="Huminiecki L."/>
            <person name="Iacono M."/>
            <person name="Ikeo K."/>
            <person name="Iwama A."/>
            <person name="Ishikawa T."/>
            <person name="Jakt M."/>
            <person name="Kanapin A."/>
            <person name="Katoh M."/>
            <person name="Kawasawa Y."/>
            <person name="Kelso J."/>
            <person name="Kitamura H."/>
            <person name="Kitano H."/>
            <person name="Kollias G."/>
            <person name="Krishnan S.P."/>
            <person name="Kruger A."/>
            <person name="Kummerfeld S.K."/>
            <person name="Kurochkin I.V."/>
            <person name="Lareau L.F."/>
            <person name="Lazarevic D."/>
            <person name="Lipovich L."/>
            <person name="Liu J."/>
            <person name="Liuni S."/>
            <person name="McWilliam S."/>
            <person name="Madan Babu M."/>
            <person name="Madera M."/>
            <person name="Marchionni L."/>
            <person name="Matsuda H."/>
            <person name="Matsuzawa S."/>
            <person name="Miki H."/>
            <person name="Mignone F."/>
            <person name="Miyake S."/>
            <person name="Morris K."/>
            <person name="Mottagui-Tabar S."/>
            <person name="Mulder N."/>
            <person name="Nakano N."/>
            <person name="Nakauchi H."/>
            <person name="Ng P."/>
            <person name="Nilsson R."/>
            <person name="Nishiguchi S."/>
            <person name="Nishikawa S."/>
            <person name="Nori F."/>
            <person name="Ohara O."/>
            <person name="Okazaki Y."/>
            <person name="Orlando V."/>
            <person name="Pang K.C."/>
            <person name="Pavan W.J."/>
            <person name="Pavesi G."/>
            <person name="Pesole G."/>
            <person name="Petrovsky N."/>
            <person name="Piazza S."/>
            <person name="Reed J."/>
            <person name="Reid J.F."/>
            <person name="Ring B.Z."/>
            <person name="Ringwald M."/>
            <person name="Rost B."/>
            <person name="Ruan Y."/>
            <person name="Salzberg S.L."/>
            <person name="Sandelin A."/>
            <person name="Schneider C."/>
            <person name="Schoenbach C."/>
            <person name="Sekiguchi K."/>
            <person name="Semple C.A."/>
            <person name="Seno S."/>
            <person name="Sessa L."/>
            <person name="Sheng Y."/>
            <person name="Shibata Y."/>
            <person name="Shimada H."/>
            <person name="Shimada K."/>
            <person name="Silva D."/>
            <person name="Sinclair B."/>
            <person name="Sperling S."/>
            <person name="Stupka E."/>
            <person name="Sugiura K."/>
            <person name="Sultana R."/>
            <person name="Takenaka Y."/>
            <person name="Taki K."/>
            <person name="Tammoja K."/>
            <person name="Tan S.L."/>
            <person name="Tang S."/>
            <person name="Taylor M.S."/>
            <person name="Tegner J."/>
            <person name="Teichmann S.A."/>
            <person name="Ueda H.R."/>
            <person name="van Nimwegen E."/>
            <person name="Verardo R."/>
            <person name="Wei C.L."/>
            <person name="Yagi K."/>
            <person name="Yamanishi H."/>
            <person name="Zabarovsky E."/>
            <person name="Zhu S."/>
            <person name="Zimmer A."/>
            <person name="Hide W."/>
            <person name="Bult C."/>
            <person name="Grimmond S.M."/>
            <person name="Teasdale R.D."/>
            <person name="Liu E.T."/>
            <person name="Brusic V."/>
            <person name="Quackenbush J."/>
            <person name="Wahlestedt C."/>
            <person name="Mattick J.S."/>
            <person name="Hume D.A."/>
            <person name="Kai C."/>
            <person name="Sasaki D."/>
            <person name="Tomaru Y."/>
            <person name="Fukuda S."/>
            <person name="Kanamori-Katayama M."/>
            <person name="Suzuki M."/>
            <person name="Aoki J."/>
            <person name="Arakawa T."/>
            <person name="Iida J."/>
            <person name="Imamura K."/>
            <person name="Itoh M."/>
            <person name="Kato T."/>
            <person name="Kawaji H."/>
            <person name="Kawagashira N."/>
            <person name="Kawashima T."/>
            <person name="Kojima M."/>
            <person name="Kondo S."/>
            <person name="Konno H."/>
            <person name="Nakano K."/>
            <person name="Ninomiya N."/>
            <person name="Nishio T."/>
            <person name="Okada M."/>
            <person name="Plessy C."/>
            <person name="Shibata K."/>
            <person name="Shiraki T."/>
            <person name="Suzuki S."/>
            <person name="Tagami M."/>
            <person name="Waki K."/>
            <person name="Watahiki A."/>
            <person name="Okamura-Oho Y."/>
            <person name="Suzuki H."/>
            <person name="Kawai J."/>
            <person name="Hayashizaki Y."/>
        </authorList>
    </citation>
    <scope>NUCLEOTIDE SEQUENCE [LARGE SCALE MRNA]</scope>
    <source>
        <strain>C57BL/6J</strain>
        <tissue>Spinal cord</tissue>
    </source>
</reference>
<reference key="2">
    <citation type="journal article" date="2004" name="Genome Res.">
        <title>The status, quality, and expansion of the NIH full-length cDNA project: the Mammalian Gene Collection (MGC).</title>
        <authorList>
            <consortium name="The MGC Project Team"/>
        </authorList>
    </citation>
    <scope>NUCLEOTIDE SEQUENCE [LARGE SCALE MRNA]</scope>
    <source>
        <strain>C57BL/6J</strain>
        <tissue>Brain</tissue>
    </source>
</reference>
<reference key="3">
    <citation type="journal article" date="2007" name="Mol. Cell">
        <title>E1-L2 activates both ubiquitin and FAT10.</title>
        <authorList>
            <person name="Chiu Y.-H."/>
            <person name="Sun Q."/>
            <person name="Chen Z.J."/>
        </authorList>
    </citation>
    <scope>FUNCTION</scope>
    <scope>DISRUPTION PHENOTYPE</scope>
    <scope>INTERACTION WITH UBD</scope>
    <scope>THIOESTER FORMATION</scope>
</reference>
<reference key="4">
    <citation type="journal article" date="2010" name="Cell">
        <title>A tissue-specific atlas of mouse protein phosphorylation and expression.</title>
        <authorList>
            <person name="Huttlin E.L."/>
            <person name="Jedrychowski M.P."/>
            <person name="Elias J.E."/>
            <person name="Goswami T."/>
            <person name="Rad R."/>
            <person name="Beausoleil S.A."/>
            <person name="Villen J."/>
            <person name="Haas W."/>
            <person name="Sowa M.E."/>
            <person name="Gygi S.P."/>
        </authorList>
    </citation>
    <scope>IDENTIFICATION BY MASS SPECTROMETRY [LARGE SCALE ANALYSIS]</scope>
    <source>
        <tissue>Brain</tissue>
        <tissue>Brown adipose tissue</tissue>
        <tissue>Heart</tissue>
        <tissue>Kidney</tissue>
        <tissue>Liver</tissue>
        <tissue>Lung</tissue>
        <tissue>Pancreas</tissue>
        <tissue>Spleen</tissue>
        <tissue>Testis</tissue>
    </source>
</reference>
<reference key="5">
    <citation type="journal article" date="2013" name="Mol. Cell">
        <title>SIRT5-mediated lysine desuccinylation impacts diverse metabolic pathways.</title>
        <authorList>
            <person name="Park J."/>
            <person name="Chen Y."/>
            <person name="Tishkoff D.X."/>
            <person name="Peng C."/>
            <person name="Tan M."/>
            <person name="Dai L."/>
            <person name="Xie Z."/>
            <person name="Zhang Y."/>
            <person name="Zwaans B.M."/>
            <person name="Skinner M.E."/>
            <person name="Lombard D.B."/>
            <person name="Zhao Y."/>
        </authorList>
    </citation>
    <scope>ACETYLATION [LARGE SCALE ANALYSIS] AT LYS-729</scope>
    <scope>IDENTIFICATION BY MASS SPECTROMETRY [LARGE SCALE ANALYSIS]</scope>
    <source>
        <tissue>Embryonic fibroblast</tissue>
    </source>
</reference>
<accession>Q8C7R4</accession>
<sequence>MERSEPLAVLSCEEASCSSWGACGASKNLPTMTTESLEIDDGLYSRQRYVLGDTAMQKMAKSCVFLSGMGGLGVEIAKNLVLAGIKALTIHDTKKCQAWDLGTNFFLCEDDVVNERNRAEAVLHRIAELNPYVQVSSSSAPLDETTDLSFLEKYQCVVLTEIKLTLQKKINNFCHSHCPPIKFISADVHGIWSRLFCDFGDEFEVSDTTGEEPKEIFISNITQANPGIVTCLESHPHKLETGQFLTFREIHGMTGLNGSVQQITVISPFSFSIGDTTKLDPYLHGGIAVQVKTPKTFCFEPLESQIKHPRCLIADFSKPEAPLEIHLAMLALDQFQENYNRKPNIRCQQDSDELLKLTVSINETLEEKPEVNADIVHWLSWTAQGFLPPLAAAVGGVASQEVLKAVTGKFSPLCQWLYLEAADTVESLGNPGHEEFLPRGDRYDAIRACIGNTLCQKLQNLNIFLVGCGAIGCEMLKNFALLGVGTGREKGMVTVTDPDLIEKSNLNRQFLFRPHHIQKPKSYTAAEATLKINPQLKIDAHLNKVCPATESIYSDEFYTKQDIIITALDNVEARRYVDSRCLANLRPLLDSGTMGTKGHTEIIVPQLTESYNSHRDPPEEEIPFCTLKSFPAAIEHTIQWARDKFESSFSHKPSLFNKFWQAYPSAEDVLQKIQNGQSLEGCFQVIKLLSRRPRIWSQCVELARLKFEKYFNHKALQLLHCFPLETRLKDGSLFWQSPKRPPSPIKFDLNEPLHLSFLQSAAKLYATVYCIPFSEKDLSVNSLMDILSEVKIEEFKPSNKVVQTDETARKPDHVPVSSEDERNAVFQLEEALSSNKATKSDLQMTVLSFEKDDDRNGHIDFITAASNLRAKMYSIEPADRFKTKRIAGKIIPAIATSTAAVSGLVALEMIKVAGGYPFDAYKNCFLNLAIPIIVFTETSEVRKTEIRNGISFTIWDRWTVHGKEDFTLSDFINAVKENYGIEPTMVVQGVKMLYVPVMPGHAKRLKLTMHKLVKPSTEKKYVDLTVSFAPDADGDEDLPGPPVRYYFSHDTNE</sequence>